<accession>A1A3C6</accession>
<name>ATPG_BIFAA</name>
<organism>
    <name type="scientific">Bifidobacterium adolescentis (strain ATCC 15703 / DSM 20083 / NCTC 11814 / E194a)</name>
    <dbReference type="NCBI Taxonomy" id="367928"/>
    <lineage>
        <taxon>Bacteria</taxon>
        <taxon>Bacillati</taxon>
        <taxon>Actinomycetota</taxon>
        <taxon>Actinomycetes</taxon>
        <taxon>Bifidobacteriales</taxon>
        <taxon>Bifidobacteriaceae</taxon>
        <taxon>Bifidobacterium</taxon>
    </lineage>
</organism>
<gene>
    <name evidence="1" type="primary">atpG</name>
    <name type="ordered locus">BAD_1428</name>
</gene>
<feature type="chain" id="PRO_1000053162" description="ATP synthase gamma chain">
    <location>
        <begin position="1"/>
        <end position="306"/>
    </location>
</feature>
<evidence type="ECO:0000255" key="1">
    <source>
        <dbReference type="HAMAP-Rule" id="MF_00815"/>
    </source>
</evidence>
<comment type="function">
    <text evidence="1">Produces ATP from ADP in the presence of a proton gradient across the membrane. The gamma chain is believed to be important in regulating ATPase activity and the flow of protons through the CF(0) complex.</text>
</comment>
<comment type="subunit">
    <text evidence="1">F-type ATPases have 2 components, CF(1) - the catalytic core - and CF(0) - the membrane proton channel. CF(1) has five subunits: alpha(3), beta(3), gamma(1), delta(1), epsilon(1). CF(0) has three main subunits: a, b and c.</text>
</comment>
<comment type="subcellular location">
    <subcellularLocation>
        <location evidence="1">Cell membrane</location>
        <topology evidence="1">Peripheral membrane protein</topology>
    </subcellularLocation>
</comment>
<comment type="similarity">
    <text evidence="1">Belongs to the ATPase gamma chain family.</text>
</comment>
<sequence>MGSQLALKSRIASTASLEKIFNAQEMIASSHIAKARDVALNAKPYTDAIFDAVQALVAHTHIDHPIVKKNEDNPRVAVLALTSDRGMAGPYTSSIIRETESLLARLDEQGKQPELYVYGRRGVTYYKYRNRPVAGTWEGDTDQPGVEVAESISKALLDAYMKPADQGGVSELYIVFTEFVNMVVQKVRVLRMLPVELVLPEQPESGPVPESDADAATPLYAFEPSVDEVLDAILPKYIQSRIHECLLTAAASETASRQNAMHTATDNARSLIDELTRKLNASRQASITQELTEIIGSADALNKKEE</sequence>
<reference key="1">
    <citation type="submission" date="2006-12" db="EMBL/GenBank/DDBJ databases">
        <title>Bifidobacterium adolescentis complete genome sequence.</title>
        <authorList>
            <person name="Suzuki T."/>
            <person name="Tsuda Y."/>
            <person name="Kanou N."/>
            <person name="Inoue T."/>
            <person name="Kumazaki K."/>
            <person name="Nagano S."/>
            <person name="Hirai S."/>
            <person name="Tanaka K."/>
            <person name="Watanabe K."/>
        </authorList>
    </citation>
    <scope>NUCLEOTIDE SEQUENCE [LARGE SCALE GENOMIC DNA]</scope>
    <source>
        <strain>ATCC 15703 / DSM 20083 / NCTC 11814 / E194a</strain>
    </source>
</reference>
<keyword id="KW-0066">ATP synthesis</keyword>
<keyword id="KW-1003">Cell membrane</keyword>
<keyword id="KW-0139">CF(1)</keyword>
<keyword id="KW-0375">Hydrogen ion transport</keyword>
<keyword id="KW-0406">Ion transport</keyword>
<keyword id="KW-0472">Membrane</keyword>
<keyword id="KW-1185">Reference proteome</keyword>
<keyword id="KW-0813">Transport</keyword>
<proteinExistence type="inferred from homology"/>
<dbReference type="EMBL" id="AP009256">
    <property type="protein sequence ID" value="BAF40209.1"/>
    <property type="molecule type" value="Genomic_DNA"/>
</dbReference>
<dbReference type="RefSeq" id="WP_011743719.1">
    <property type="nucleotide sequence ID" value="NC_008618.1"/>
</dbReference>
<dbReference type="SMR" id="A1A3C6"/>
<dbReference type="STRING" id="367928.BAD_1428"/>
<dbReference type="PaxDb" id="1680-BADO_1603"/>
<dbReference type="GeneID" id="4557544"/>
<dbReference type="KEGG" id="bad:BAD_1428"/>
<dbReference type="HOGENOM" id="CLU_050669_0_0_11"/>
<dbReference type="Proteomes" id="UP000008702">
    <property type="component" value="Chromosome"/>
</dbReference>
<dbReference type="GO" id="GO:0005886">
    <property type="term" value="C:plasma membrane"/>
    <property type="evidence" value="ECO:0007669"/>
    <property type="project" value="UniProtKB-SubCell"/>
</dbReference>
<dbReference type="GO" id="GO:0045259">
    <property type="term" value="C:proton-transporting ATP synthase complex"/>
    <property type="evidence" value="ECO:0007669"/>
    <property type="project" value="UniProtKB-KW"/>
</dbReference>
<dbReference type="GO" id="GO:0005524">
    <property type="term" value="F:ATP binding"/>
    <property type="evidence" value="ECO:0007669"/>
    <property type="project" value="UniProtKB-UniRule"/>
</dbReference>
<dbReference type="GO" id="GO:0046933">
    <property type="term" value="F:proton-transporting ATP synthase activity, rotational mechanism"/>
    <property type="evidence" value="ECO:0007669"/>
    <property type="project" value="UniProtKB-UniRule"/>
</dbReference>
<dbReference type="GO" id="GO:0042777">
    <property type="term" value="P:proton motive force-driven plasma membrane ATP synthesis"/>
    <property type="evidence" value="ECO:0007669"/>
    <property type="project" value="UniProtKB-UniRule"/>
</dbReference>
<dbReference type="CDD" id="cd12151">
    <property type="entry name" value="F1-ATPase_gamma"/>
    <property type="match status" value="1"/>
</dbReference>
<dbReference type="Gene3D" id="3.40.1380.10">
    <property type="match status" value="1"/>
</dbReference>
<dbReference type="Gene3D" id="1.10.287.80">
    <property type="entry name" value="ATP synthase, gamma subunit, helix hairpin domain"/>
    <property type="match status" value="1"/>
</dbReference>
<dbReference type="HAMAP" id="MF_00815">
    <property type="entry name" value="ATP_synth_gamma_bact"/>
    <property type="match status" value="1"/>
</dbReference>
<dbReference type="InterPro" id="IPR035968">
    <property type="entry name" value="ATP_synth_F1_ATPase_gsu"/>
</dbReference>
<dbReference type="InterPro" id="IPR000131">
    <property type="entry name" value="ATP_synth_F1_gsu"/>
</dbReference>
<dbReference type="NCBIfam" id="TIGR01146">
    <property type="entry name" value="ATPsyn_F1gamma"/>
    <property type="match status" value="1"/>
</dbReference>
<dbReference type="NCBIfam" id="NF004145">
    <property type="entry name" value="PRK05621.1-2"/>
    <property type="match status" value="1"/>
</dbReference>
<dbReference type="PANTHER" id="PTHR11693">
    <property type="entry name" value="ATP SYNTHASE GAMMA CHAIN"/>
    <property type="match status" value="1"/>
</dbReference>
<dbReference type="PANTHER" id="PTHR11693:SF22">
    <property type="entry name" value="ATP SYNTHASE SUBUNIT GAMMA, MITOCHONDRIAL"/>
    <property type="match status" value="1"/>
</dbReference>
<dbReference type="Pfam" id="PF00231">
    <property type="entry name" value="ATP-synt"/>
    <property type="match status" value="1"/>
</dbReference>
<dbReference type="PRINTS" id="PR00126">
    <property type="entry name" value="ATPASEGAMMA"/>
</dbReference>
<dbReference type="SUPFAM" id="SSF52943">
    <property type="entry name" value="ATP synthase (F1-ATPase), gamma subunit"/>
    <property type="match status" value="1"/>
</dbReference>
<protein>
    <recommendedName>
        <fullName evidence="1">ATP synthase gamma chain</fullName>
    </recommendedName>
    <alternativeName>
        <fullName evidence="1">ATP synthase F1 sector gamma subunit</fullName>
    </alternativeName>
    <alternativeName>
        <fullName evidence="1">F-ATPase gamma subunit</fullName>
    </alternativeName>
</protein>